<accession>A2BVK5</accession>
<proteinExistence type="inferred from homology"/>
<reference key="1">
    <citation type="journal article" date="2007" name="PLoS Genet.">
        <title>Patterns and implications of gene gain and loss in the evolution of Prochlorococcus.</title>
        <authorList>
            <person name="Kettler G.C."/>
            <person name="Martiny A.C."/>
            <person name="Huang K."/>
            <person name="Zucker J."/>
            <person name="Coleman M.L."/>
            <person name="Rodrigue S."/>
            <person name="Chen F."/>
            <person name="Lapidus A."/>
            <person name="Ferriera S."/>
            <person name="Johnson J."/>
            <person name="Steglich C."/>
            <person name="Church G.M."/>
            <person name="Richardson P."/>
            <person name="Chisholm S.W."/>
        </authorList>
    </citation>
    <scope>NUCLEOTIDE SEQUENCE [LARGE SCALE GENOMIC DNA]</scope>
    <source>
        <strain>MIT 9515</strain>
    </source>
</reference>
<evidence type="ECO:0000255" key="1">
    <source>
        <dbReference type="HAMAP-Rule" id="MF_00355"/>
    </source>
</evidence>
<sequence>MTSTINKHLDGEGSVQVKQDPKVNIEEGALVIAVYGKGGIGKSTTSSNLSAAFSKLGKKVLQIGCDPKHDSTFTLTHKMVPTVIDILEEVDFHSEELRPTDFMFEGFNGVMCVESGGPPAGTGCGGYVTGQTVKLLKEHHLLEDTDVVIFDVLGDVVCGGFAAPLQHANYCLIVTANDFDSIFAMNRIVSAIKAKAKNYKVRLGGVVANRSKDTDQIDKFNDRTGLKTMAHFKDVDAIRRSRLKKCTIFEMEPTEDVIEVQNEYLSLAKNMLENVEPLEGTPLKDREIFDLLGFD</sequence>
<name>CHLL_PROM5</name>
<keyword id="KW-0004">4Fe-4S</keyword>
<keyword id="KW-0067">ATP-binding</keyword>
<keyword id="KW-0149">Chlorophyll biosynthesis</keyword>
<keyword id="KW-0408">Iron</keyword>
<keyword id="KW-0411">Iron-sulfur</keyword>
<keyword id="KW-0460">Magnesium</keyword>
<keyword id="KW-0479">Metal-binding</keyword>
<keyword id="KW-0547">Nucleotide-binding</keyword>
<keyword id="KW-0560">Oxidoreductase</keyword>
<keyword id="KW-0602">Photosynthesis</keyword>
<organism>
    <name type="scientific">Prochlorococcus marinus (strain MIT 9515)</name>
    <dbReference type="NCBI Taxonomy" id="167542"/>
    <lineage>
        <taxon>Bacteria</taxon>
        <taxon>Bacillati</taxon>
        <taxon>Cyanobacteriota</taxon>
        <taxon>Cyanophyceae</taxon>
        <taxon>Synechococcales</taxon>
        <taxon>Prochlorococcaceae</taxon>
        <taxon>Prochlorococcus</taxon>
    </lineage>
</organism>
<dbReference type="EC" id="1.3.7.7" evidence="1"/>
<dbReference type="EMBL" id="CP000552">
    <property type="protein sequence ID" value="ABM71816.1"/>
    <property type="molecule type" value="Genomic_DNA"/>
</dbReference>
<dbReference type="RefSeq" id="WP_011819923.1">
    <property type="nucleotide sequence ID" value="NC_008817.1"/>
</dbReference>
<dbReference type="SMR" id="A2BVK5"/>
<dbReference type="STRING" id="167542.P9515_06071"/>
<dbReference type="GeneID" id="60201399"/>
<dbReference type="KEGG" id="pmc:P9515_06071"/>
<dbReference type="eggNOG" id="COG1348">
    <property type="taxonomic scope" value="Bacteria"/>
</dbReference>
<dbReference type="HOGENOM" id="CLU_059373_2_0_3"/>
<dbReference type="OrthoDB" id="9778641at2"/>
<dbReference type="UniPathway" id="UPA00670"/>
<dbReference type="Proteomes" id="UP000001589">
    <property type="component" value="Chromosome"/>
</dbReference>
<dbReference type="GO" id="GO:0051539">
    <property type="term" value="F:4 iron, 4 sulfur cluster binding"/>
    <property type="evidence" value="ECO:0007669"/>
    <property type="project" value="UniProtKB-UniRule"/>
</dbReference>
<dbReference type="GO" id="GO:0005524">
    <property type="term" value="F:ATP binding"/>
    <property type="evidence" value="ECO:0007669"/>
    <property type="project" value="UniProtKB-UniRule"/>
</dbReference>
<dbReference type="GO" id="GO:0046872">
    <property type="term" value="F:metal ion binding"/>
    <property type="evidence" value="ECO:0007669"/>
    <property type="project" value="UniProtKB-KW"/>
</dbReference>
<dbReference type="GO" id="GO:0016730">
    <property type="term" value="F:oxidoreductase activity, acting on iron-sulfur proteins as donors"/>
    <property type="evidence" value="ECO:0007669"/>
    <property type="project" value="InterPro"/>
</dbReference>
<dbReference type="GO" id="GO:0016636">
    <property type="term" value="F:oxidoreductase activity, acting on the CH-CH group of donors, iron-sulfur protein as acceptor"/>
    <property type="evidence" value="ECO:0007669"/>
    <property type="project" value="UniProtKB-UniRule"/>
</dbReference>
<dbReference type="GO" id="GO:0036068">
    <property type="term" value="P:light-independent chlorophyll biosynthetic process"/>
    <property type="evidence" value="ECO:0007669"/>
    <property type="project" value="UniProtKB-UniRule"/>
</dbReference>
<dbReference type="GO" id="GO:0019685">
    <property type="term" value="P:photosynthesis, dark reaction"/>
    <property type="evidence" value="ECO:0007669"/>
    <property type="project" value="InterPro"/>
</dbReference>
<dbReference type="CDD" id="cd02032">
    <property type="entry name" value="Bchl-like"/>
    <property type="match status" value="1"/>
</dbReference>
<dbReference type="Gene3D" id="3.40.50.300">
    <property type="entry name" value="P-loop containing nucleotide triphosphate hydrolases"/>
    <property type="match status" value="1"/>
</dbReference>
<dbReference type="HAMAP" id="MF_00355">
    <property type="entry name" value="ChlL_BchL"/>
    <property type="match status" value="1"/>
</dbReference>
<dbReference type="InterPro" id="IPR030655">
    <property type="entry name" value="NifH/chlL_CS"/>
</dbReference>
<dbReference type="InterPro" id="IPR000392">
    <property type="entry name" value="NifH/frxC"/>
</dbReference>
<dbReference type="InterPro" id="IPR027417">
    <property type="entry name" value="P-loop_NTPase"/>
</dbReference>
<dbReference type="InterPro" id="IPR005971">
    <property type="entry name" value="Protochlorophyllide_ATP-bd"/>
</dbReference>
<dbReference type="NCBIfam" id="TIGR01281">
    <property type="entry name" value="DPOR_bchL"/>
    <property type="match status" value="1"/>
</dbReference>
<dbReference type="PANTHER" id="PTHR42864">
    <property type="entry name" value="LIGHT-INDEPENDENT PROTOCHLOROPHYLLIDE REDUCTASE IRON-SULFUR ATP-BINDING PROTEIN"/>
    <property type="match status" value="1"/>
</dbReference>
<dbReference type="PANTHER" id="PTHR42864:SF2">
    <property type="entry name" value="LIGHT-INDEPENDENT PROTOCHLOROPHYLLIDE REDUCTASE IRON-SULFUR ATP-BINDING PROTEIN"/>
    <property type="match status" value="1"/>
</dbReference>
<dbReference type="Pfam" id="PF00142">
    <property type="entry name" value="Fer4_NifH"/>
    <property type="match status" value="1"/>
</dbReference>
<dbReference type="PIRSF" id="PIRSF000363">
    <property type="entry name" value="Nitrogenase_iron"/>
    <property type="match status" value="1"/>
</dbReference>
<dbReference type="PRINTS" id="PR00091">
    <property type="entry name" value="NITROGNASEII"/>
</dbReference>
<dbReference type="SUPFAM" id="SSF52540">
    <property type="entry name" value="P-loop containing nucleoside triphosphate hydrolases"/>
    <property type="match status" value="1"/>
</dbReference>
<dbReference type="PROSITE" id="PS00746">
    <property type="entry name" value="NIFH_FRXC_1"/>
    <property type="match status" value="1"/>
</dbReference>
<dbReference type="PROSITE" id="PS00692">
    <property type="entry name" value="NIFH_FRXC_2"/>
    <property type="match status" value="1"/>
</dbReference>
<dbReference type="PROSITE" id="PS51026">
    <property type="entry name" value="NIFH_FRXC_3"/>
    <property type="match status" value="1"/>
</dbReference>
<comment type="function">
    <text evidence="1">Component of the dark-operative protochlorophyllide reductase (DPOR) that uses Mg-ATP and reduced ferredoxin to reduce ring D of protochlorophyllide (Pchlide) to form chlorophyllide a (Chlide). This reaction is light-independent. The L component serves as a unique electron donor to the NB-component of the complex, and binds Mg-ATP.</text>
</comment>
<comment type="catalytic activity">
    <reaction evidence="1">
        <text>chlorophyllide a + oxidized 2[4Fe-4S]-[ferredoxin] + 2 ADP + 2 phosphate = protochlorophyllide a + reduced 2[4Fe-4S]-[ferredoxin] + 2 ATP + 2 H2O</text>
        <dbReference type="Rhea" id="RHEA:28202"/>
        <dbReference type="Rhea" id="RHEA-COMP:10002"/>
        <dbReference type="Rhea" id="RHEA-COMP:10004"/>
        <dbReference type="ChEBI" id="CHEBI:15377"/>
        <dbReference type="ChEBI" id="CHEBI:30616"/>
        <dbReference type="ChEBI" id="CHEBI:33722"/>
        <dbReference type="ChEBI" id="CHEBI:33723"/>
        <dbReference type="ChEBI" id="CHEBI:43474"/>
        <dbReference type="ChEBI" id="CHEBI:83348"/>
        <dbReference type="ChEBI" id="CHEBI:83350"/>
        <dbReference type="ChEBI" id="CHEBI:456216"/>
        <dbReference type="EC" id="1.3.7.7"/>
    </reaction>
</comment>
<comment type="cofactor">
    <cofactor evidence="1">
        <name>[4Fe-4S] cluster</name>
        <dbReference type="ChEBI" id="CHEBI:49883"/>
    </cofactor>
    <text evidence="1">Binds 1 [4Fe-4S] cluster per dimer.</text>
</comment>
<comment type="pathway">
    <text evidence="1">Porphyrin-containing compound metabolism; chlorophyll biosynthesis (light-independent).</text>
</comment>
<comment type="subunit">
    <text evidence="1">Homodimer. Protochlorophyllide reductase is composed of three subunits; ChlL, ChlN and ChlB.</text>
</comment>
<comment type="similarity">
    <text evidence="1">Belongs to the NifH/BchL/ChlL family.</text>
</comment>
<feature type="chain" id="PRO_0000324064" description="Light-independent protochlorophyllide reductase iron-sulfur ATP-binding protein">
    <location>
        <begin position="1"/>
        <end position="295"/>
    </location>
</feature>
<feature type="binding site" evidence="1">
    <location>
        <begin position="39"/>
        <end position="44"/>
    </location>
    <ligand>
        <name>ATP</name>
        <dbReference type="ChEBI" id="CHEBI:30616"/>
    </ligand>
</feature>
<feature type="binding site" evidence="1">
    <location>
        <position position="43"/>
    </location>
    <ligand>
        <name>Mg(2+)</name>
        <dbReference type="ChEBI" id="CHEBI:18420"/>
    </ligand>
</feature>
<feature type="binding site" evidence="1">
    <location>
        <position position="68"/>
    </location>
    <ligand>
        <name>ATP</name>
        <dbReference type="ChEBI" id="CHEBI:30616"/>
    </ligand>
</feature>
<feature type="binding site" evidence="1">
    <location>
        <position position="124"/>
    </location>
    <ligand>
        <name>[4Fe-4S] cluster</name>
        <dbReference type="ChEBI" id="CHEBI:49883"/>
        <note>ligand shared between dimeric partners</note>
    </ligand>
</feature>
<feature type="binding site" evidence="1">
    <location>
        <position position="158"/>
    </location>
    <ligand>
        <name>[4Fe-4S] cluster</name>
        <dbReference type="ChEBI" id="CHEBI:49883"/>
        <note>ligand shared between dimeric partners</note>
    </ligand>
</feature>
<feature type="binding site" evidence="1">
    <location>
        <begin position="209"/>
        <end position="210"/>
    </location>
    <ligand>
        <name>ATP</name>
        <dbReference type="ChEBI" id="CHEBI:30616"/>
    </ligand>
</feature>
<gene>
    <name evidence="1" type="primary">chlL</name>
    <name type="ordered locus">P9515_06071</name>
</gene>
<protein>
    <recommendedName>
        <fullName evidence="1">Light-independent protochlorophyllide reductase iron-sulfur ATP-binding protein</fullName>
        <shortName evidence="1">DPOR subunit L</shortName>
        <shortName evidence="1">LI-POR subunit L</shortName>
        <ecNumber evidence="1">1.3.7.7</ecNumber>
    </recommendedName>
</protein>